<name>AROA_CLOP1</name>
<proteinExistence type="inferred from homology"/>
<reference key="1">
    <citation type="journal article" date="2006" name="Genome Res.">
        <title>Skewed genomic variability in strains of the toxigenic bacterial pathogen, Clostridium perfringens.</title>
        <authorList>
            <person name="Myers G.S.A."/>
            <person name="Rasko D.A."/>
            <person name="Cheung J.K."/>
            <person name="Ravel J."/>
            <person name="Seshadri R."/>
            <person name="DeBoy R.T."/>
            <person name="Ren Q."/>
            <person name="Varga J."/>
            <person name="Awad M.M."/>
            <person name="Brinkac L.M."/>
            <person name="Daugherty S.C."/>
            <person name="Haft D.H."/>
            <person name="Dodson R.J."/>
            <person name="Madupu R."/>
            <person name="Nelson W.C."/>
            <person name="Rosovitz M.J."/>
            <person name="Sullivan S.A."/>
            <person name="Khouri H."/>
            <person name="Dimitrov G.I."/>
            <person name="Watkins K.L."/>
            <person name="Mulligan S."/>
            <person name="Benton J."/>
            <person name="Radune D."/>
            <person name="Fisher D.J."/>
            <person name="Atkins H.S."/>
            <person name="Hiscox T."/>
            <person name="Jost B.H."/>
            <person name="Billington S.J."/>
            <person name="Songer J.G."/>
            <person name="McClane B.A."/>
            <person name="Titball R.W."/>
            <person name="Rood J.I."/>
            <person name="Melville S.B."/>
            <person name="Paulsen I.T."/>
        </authorList>
    </citation>
    <scope>NUCLEOTIDE SEQUENCE [LARGE SCALE GENOMIC DNA]</scope>
    <source>
        <strain>ATCC 13124 / DSM 756 / JCM 1290 / NCIMB 6125 / NCTC 8237 / S 107 / Type A</strain>
    </source>
</reference>
<organism>
    <name type="scientific">Clostridium perfringens (strain ATCC 13124 / DSM 756 / JCM 1290 / NCIMB 6125 / NCTC 8237 / Type A)</name>
    <dbReference type="NCBI Taxonomy" id="195103"/>
    <lineage>
        <taxon>Bacteria</taxon>
        <taxon>Bacillati</taxon>
        <taxon>Bacillota</taxon>
        <taxon>Clostridia</taxon>
        <taxon>Eubacteriales</taxon>
        <taxon>Clostridiaceae</taxon>
        <taxon>Clostridium</taxon>
    </lineage>
</organism>
<feature type="chain" id="PRO_1000099691" description="3-phosphoshikimate 1-carboxyvinyltransferase">
    <location>
        <begin position="1"/>
        <end position="424"/>
    </location>
</feature>
<feature type="active site" description="Proton acceptor" evidence="1">
    <location>
        <position position="306"/>
    </location>
</feature>
<feature type="binding site" evidence="1">
    <location>
        <position position="21"/>
    </location>
    <ligand>
        <name>3-phosphoshikimate</name>
        <dbReference type="ChEBI" id="CHEBI:145989"/>
    </ligand>
</feature>
<feature type="binding site" evidence="1">
    <location>
        <position position="21"/>
    </location>
    <ligand>
        <name>phosphoenolpyruvate</name>
        <dbReference type="ChEBI" id="CHEBI:58702"/>
    </ligand>
</feature>
<feature type="binding site" evidence="1">
    <location>
        <position position="22"/>
    </location>
    <ligand>
        <name>3-phosphoshikimate</name>
        <dbReference type="ChEBI" id="CHEBI:145989"/>
    </ligand>
</feature>
<feature type="binding site" evidence="1">
    <location>
        <position position="26"/>
    </location>
    <ligand>
        <name>3-phosphoshikimate</name>
        <dbReference type="ChEBI" id="CHEBI:145989"/>
    </ligand>
</feature>
<feature type="binding site" evidence="1">
    <location>
        <position position="92"/>
    </location>
    <ligand>
        <name>phosphoenolpyruvate</name>
        <dbReference type="ChEBI" id="CHEBI:58702"/>
    </ligand>
</feature>
<feature type="binding site" evidence="1">
    <location>
        <position position="120"/>
    </location>
    <ligand>
        <name>phosphoenolpyruvate</name>
        <dbReference type="ChEBI" id="CHEBI:58702"/>
    </ligand>
</feature>
<feature type="binding site" evidence="1">
    <location>
        <position position="163"/>
    </location>
    <ligand>
        <name>3-phosphoshikimate</name>
        <dbReference type="ChEBI" id="CHEBI:145989"/>
    </ligand>
</feature>
<feature type="binding site" evidence="1">
    <location>
        <position position="164"/>
    </location>
    <ligand>
        <name>3-phosphoshikimate</name>
        <dbReference type="ChEBI" id="CHEBI:145989"/>
    </ligand>
</feature>
<feature type="binding site" evidence="1">
    <location>
        <position position="165"/>
    </location>
    <ligand>
        <name>3-phosphoshikimate</name>
        <dbReference type="ChEBI" id="CHEBI:145989"/>
    </ligand>
</feature>
<feature type="binding site" evidence="1">
    <location>
        <position position="165"/>
    </location>
    <ligand>
        <name>phosphoenolpyruvate</name>
        <dbReference type="ChEBI" id="CHEBI:58702"/>
    </ligand>
</feature>
<feature type="binding site" evidence="1">
    <location>
        <position position="191"/>
    </location>
    <ligand>
        <name>3-phosphoshikimate</name>
        <dbReference type="ChEBI" id="CHEBI:145989"/>
    </ligand>
</feature>
<feature type="binding site" evidence="1">
    <location>
        <position position="306"/>
    </location>
    <ligand>
        <name>3-phosphoshikimate</name>
        <dbReference type="ChEBI" id="CHEBI:145989"/>
    </ligand>
</feature>
<feature type="binding site" evidence="1">
    <location>
        <position position="333"/>
    </location>
    <ligand>
        <name>3-phosphoshikimate</name>
        <dbReference type="ChEBI" id="CHEBI:145989"/>
    </ligand>
</feature>
<feature type="binding site" evidence="1">
    <location>
        <position position="337"/>
    </location>
    <ligand>
        <name>phosphoenolpyruvate</name>
        <dbReference type="ChEBI" id="CHEBI:58702"/>
    </ligand>
</feature>
<feature type="binding site" evidence="1">
    <location>
        <position position="379"/>
    </location>
    <ligand>
        <name>phosphoenolpyruvate</name>
        <dbReference type="ChEBI" id="CHEBI:58702"/>
    </ligand>
</feature>
<feature type="binding site" evidence="1">
    <location>
        <position position="405"/>
    </location>
    <ligand>
        <name>phosphoenolpyruvate</name>
        <dbReference type="ChEBI" id="CHEBI:58702"/>
    </ligand>
</feature>
<comment type="function">
    <text evidence="1">Catalyzes the transfer of the enolpyruvyl moiety of phosphoenolpyruvate (PEP) to the 5-hydroxyl of shikimate-3-phosphate (S3P) to produce enolpyruvyl shikimate-3-phosphate and inorganic phosphate.</text>
</comment>
<comment type="catalytic activity">
    <reaction evidence="1">
        <text>3-phosphoshikimate + phosphoenolpyruvate = 5-O-(1-carboxyvinyl)-3-phosphoshikimate + phosphate</text>
        <dbReference type="Rhea" id="RHEA:21256"/>
        <dbReference type="ChEBI" id="CHEBI:43474"/>
        <dbReference type="ChEBI" id="CHEBI:57701"/>
        <dbReference type="ChEBI" id="CHEBI:58702"/>
        <dbReference type="ChEBI" id="CHEBI:145989"/>
        <dbReference type="EC" id="2.5.1.19"/>
    </reaction>
    <physiologicalReaction direction="left-to-right" evidence="1">
        <dbReference type="Rhea" id="RHEA:21257"/>
    </physiologicalReaction>
</comment>
<comment type="pathway">
    <text evidence="1">Metabolic intermediate biosynthesis; chorismate biosynthesis; chorismate from D-erythrose 4-phosphate and phosphoenolpyruvate: step 6/7.</text>
</comment>
<comment type="subunit">
    <text evidence="1">Monomer.</text>
</comment>
<comment type="subcellular location">
    <subcellularLocation>
        <location evidence="1">Cytoplasm</location>
    </subcellularLocation>
</comment>
<comment type="similarity">
    <text evidence="1">Belongs to the EPSP synthase family.</text>
</comment>
<evidence type="ECO:0000255" key="1">
    <source>
        <dbReference type="HAMAP-Rule" id="MF_00210"/>
    </source>
</evidence>
<protein>
    <recommendedName>
        <fullName evidence="1">3-phosphoshikimate 1-carboxyvinyltransferase</fullName>
        <ecNumber evidence="1">2.5.1.19</ecNumber>
    </recommendedName>
    <alternativeName>
        <fullName evidence="1">5-enolpyruvylshikimate-3-phosphate synthase</fullName>
        <shortName evidence="1">EPSP synthase</shortName>
        <shortName evidence="1">EPSPS</shortName>
    </alternativeName>
</protein>
<gene>
    <name evidence="1" type="primary">aroA</name>
    <name type="ordered locus">CPF_0689</name>
</gene>
<sequence length="424" mass="47063">MKKVIITPSKLKGSVKIPPSKSMAHRAIICASLSKGESVISNIDFSEDIIATMEGMKSLGANIKVEKDKLIINGENILKDSNYKVIDCNESGSTLRFLVPISLIKDNRVNFIGRGNLGKRPLKTYYEIFEEQEVKYSYEEENLDLNIEGSLKGGEFKVKGNISSQFISGLLFTLPLLKEDSKIIITTELESKGYIDLTLDMIEKFGVTIKNNNYREFLIKGNQSYKPMNYKVEGDYSQAAFYFSAGALGSEINCLDLDLSSYQGDKECIEILEGMGARLIENQEESLSIIHGDLNGTIIDASQCPDIIPVLTVVAALSKGETRIINGERLRIKECDRLNAICTELNKLGADIKELKDGLIIKGVKELIGGEVYSHKDHRIAMSLAIASTRCKEEVIIKEPDCVKKSYPGFWEDFKSLGGILKGE</sequence>
<accession>Q0TT99</accession>
<keyword id="KW-0028">Amino-acid biosynthesis</keyword>
<keyword id="KW-0057">Aromatic amino acid biosynthesis</keyword>
<keyword id="KW-0963">Cytoplasm</keyword>
<keyword id="KW-0808">Transferase</keyword>
<dbReference type="EC" id="2.5.1.19" evidence="1"/>
<dbReference type="EMBL" id="CP000246">
    <property type="protein sequence ID" value="ABG82786.1"/>
    <property type="molecule type" value="Genomic_DNA"/>
</dbReference>
<dbReference type="RefSeq" id="WP_011590309.1">
    <property type="nucleotide sequence ID" value="NC_008261.1"/>
</dbReference>
<dbReference type="SMR" id="Q0TT99"/>
<dbReference type="STRING" id="195103.CPF_0689"/>
<dbReference type="PaxDb" id="195103-CPF_0689"/>
<dbReference type="KEGG" id="cpf:CPF_0689"/>
<dbReference type="eggNOG" id="COG0128">
    <property type="taxonomic scope" value="Bacteria"/>
</dbReference>
<dbReference type="HOGENOM" id="CLU_024321_0_0_9"/>
<dbReference type="UniPathway" id="UPA00053">
    <property type="reaction ID" value="UER00089"/>
</dbReference>
<dbReference type="Proteomes" id="UP000001823">
    <property type="component" value="Chromosome"/>
</dbReference>
<dbReference type="GO" id="GO:0005737">
    <property type="term" value="C:cytoplasm"/>
    <property type="evidence" value="ECO:0007669"/>
    <property type="project" value="UniProtKB-SubCell"/>
</dbReference>
<dbReference type="GO" id="GO:0003866">
    <property type="term" value="F:3-phosphoshikimate 1-carboxyvinyltransferase activity"/>
    <property type="evidence" value="ECO:0007669"/>
    <property type="project" value="UniProtKB-UniRule"/>
</dbReference>
<dbReference type="GO" id="GO:0008652">
    <property type="term" value="P:amino acid biosynthetic process"/>
    <property type="evidence" value="ECO:0007669"/>
    <property type="project" value="UniProtKB-KW"/>
</dbReference>
<dbReference type="GO" id="GO:0009073">
    <property type="term" value="P:aromatic amino acid family biosynthetic process"/>
    <property type="evidence" value="ECO:0007669"/>
    <property type="project" value="UniProtKB-KW"/>
</dbReference>
<dbReference type="GO" id="GO:0009423">
    <property type="term" value="P:chorismate biosynthetic process"/>
    <property type="evidence" value="ECO:0007669"/>
    <property type="project" value="UniProtKB-UniRule"/>
</dbReference>
<dbReference type="CDD" id="cd01556">
    <property type="entry name" value="EPSP_synthase"/>
    <property type="match status" value="1"/>
</dbReference>
<dbReference type="Gene3D" id="3.65.10.10">
    <property type="entry name" value="Enolpyruvate transferase domain"/>
    <property type="match status" value="2"/>
</dbReference>
<dbReference type="HAMAP" id="MF_00210">
    <property type="entry name" value="EPSP_synth"/>
    <property type="match status" value="1"/>
</dbReference>
<dbReference type="InterPro" id="IPR001986">
    <property type="entry name" value="Enolpyruvate_Tfrase_dom"/>
</dbReference>
<dbReference type="InterPro" id="IPR036968">
    <property type="entry name" value="Enolpyruvate_Tfrase_sf"/>
</dbReference>
<dbReference type="InterPro" id="IPR006264">
    <property type="entry name" value="EPSP_synthase"/>
</dbReference>
<dbReference type="InterPro" id="IPR023193">
    <property type="entry name" value="EPSP_synthase_CS"/>
</dbReference>
<dbReference type="InterPro" id="IPR013792">
    <property type="entry name" value="RNA3'P_cycl/enolpyr_Trfase_a/b"/>
</dbReference>
<dbReference type="NCBIfam" id="TIGR01356">
    <property type="entry name" value="aroA"/>
    <property type="match status" value="1"/>
</dbReference>
<dbReference type="PANTHER" id="PTHR21090">
    <property type="entry name" value="AROM/DEHYDROQUINATE SYNTHASE"/>
    <property type="match status" value="1"/>
</dbReference>
<dbReference type="PANTHER" id="PTHR21090:SF5">
    <property type="entry name" value="PENTAFUNCTIONAL AROM POLYPEPTIDE"/>
    <property type="match status" value="1"/>
</dbReference>
<dbReference type="Pfam" id="PF00275">
    <property type="entry name" value="EPSP_synthase"/>
    <property type="match status" value="1"/>
</dbReference>
<dbReference type="PIRSF" id="PIRSF000505">
    <property type="entry name" value="EPSPS"/>
    <property type="match status" value="1"/>
</dbReference>
<dbReference type="SUPFAM" id="SSF55205">
    <property type="entry name" value="EPT/RTPC-like"/>
    <property type="match status" value="1"/>
</dbReference>
<dbReference type="PROSITE" id="PS00885">
    <property type="entry name" value="EPSP_SYNTHASE_2"/>
    <property type="match status" value="1"/>
</dbReference>